<gene>
    <name evidence="7" type="primary">LMBRD2</name>
</gene>
<evidence type="ECO:0000255" key="1"/>
<evidence type="ECO:0000256" key="2">
    <source>
        <dbReference type="SAM" id="MobiDB-lite"/>
    </source>
</evidence>
<evidence type="ECO:0000269" key="3">
    <source>
    </source>
</evidence>
<evidence type="ECO:0000269" key="4">
    <source>
    </source>
</evidence>
<evidence type="ECO:0000305" key="5"/>
<evidence type="ECO:0000305" key="6">
    <source>
    </source>
</evidence>
<evidence type="ECO:0000312" key="7">
    <source>
        <dbReference type="HGNC" id="HGNC:25287"/>
    </source>
</evidence>
<evidence type="ECO:0007744" key="8">
    <source>
    </source>
</evidence>
<accession>Q68DH5</accession>
<accession>B3KRB6</accession>
<accession>Q9NTC7</accession>
<name>LMBD2_HUMAN</name>
<reference key="1">
    <citation type="journal article" date="2004" name="Nat. Genet.">
        <title>Complete sequencing and characterization of 21,243 full-length human cDNAs.</title>
        <authorList>
            <person name="Ota T."/>
            <person name="Suzuki Y."/>
            <person name="Nishikawa T."/>
            <person name="Otsuki T."/>
            <person name="Sugiyama T."/>
            <person name="Irie R."/>
            <person name="Wakamatsu A."/>
            <person name="Hayashi K."/>
            <person name="Sato H."/>
            <person name="Nagai K."/>
            <person name="Kimura K."/>
            <person name="Makita H."/>
            <person name="Sekine M."/>
            <person name="Obayashi M."/>
            <person name="Nishi T."/>
            <person name="Shibahara T."/>
            <person name="Tanaka T."/>
            <person name="Ishii S."/>
            <person name="Yamamoto J."/>
            <person name="Saito K."/>
            <person name="Kawai Y."/>
            <person name="Isono Y."/>
            <person name="Nakamura Y."/>
            <person name="Nagahari K."/>
            <person name="Murakami K."/>
            <person name="Yasuda T."/>
            <person name="Iwayanagi T."/>
            <person name="Wagatsuma M."/>
            <person name="Shiratori A."/>
            <person name="Sudo H."/>
            <person name="Hosoiri T."/>
            <person name="Kaku Y."/>
            <person name="Kodaira H."/>
            <person name="Kondo H."/>
            <person name="Sugawara M."/>
            <person name="Takahashi M."/>
            <person name="Kanda K."/>
            <person name="Yokoi T."/>
            <person name="Furuya T."/>
            <person name="Kikkawa E."/>
            <person name="Omura Y."/>
            <person name="Abe K."/>
            <person name="Kamihara K."/>
            <person name="Katsuta N."/>
            <person name="Sato K."/>
            <person name="Tanikawa M."/>
            <person name="Yamazaki M."/>
            <person name="Ninomiya K."/>
            <person name="Ishibashi T."/>
            <person name="Yamashita H."/>
            <person name="Murakawa K."/>
            <person name="Fujimori K."/>
            <person name="Tanai H."/>
            <person name="Kimata M."/>
            <person name="Watanabe M."/>
            <person name="Hiraoka S."/>
            <person name="Chiba Y."/>
            <person name="Ishida S."/>
            <person name="Ono Y."/>
            <person name="Takiguchi S."/>
            <person name="Watanabe S."/>
            <person name="Yosida M."/>
            <person name="Hotuta T."/>
            <person name="Kusano J."/>
            <person name="Kanehori K."/>
            <person name="Takahashi-Fujii A."/>
            <person name="Hara H."/>
            <person name="Tanase T.-O."/>
            <person name="Nomura Y."/>
            <person name="Togiya S."/>
            <person name="Komai F."/>
            <person name="Hara R."/>
            <person name="Takeuchi K."/>
            <person name="Arita M."/>
            <person name="Imose N."/>
            <person name="Musashino K."/>
            <person name="Yuuki H."/>
            <person name="Oshima A."/>
            <person name="Sasaki N."/>
            <person name="Aotsuka S."/>
            <person name="Yoshikawa Y."/>
            <person name="Matsunawa H."/>
            <person name="Ichihara T."/>
            <person name="Shiohata N."/>
            <person name="Sano S."/>
            <person name="Moriya S."/>
            <person name="Momiyama H."/>
            <person name="Satoh N."/>
            <person name="Takami S."/>
            <person name="Terashima Y."/>
            <person name="Suzuki O."/>
            <person name="Nakagawa S."/>
            <person name="Senoh A."/>
            <person name="Mizoguchi H."/>
            <person name="Goto Y."/>
            <person name="Shimizu F."/>
            <person name="Wakebe H."/>
            <person name="Hishigaki H."/>
            <person name="Watanabe T."/>
            <person name="Sugiyama A."/>
            <person name="Takemoto M."/>
            <person name="Kawakami B."/>
            <person name="Yamazaki M."/>
            <person name="Watanabe K."/>
            <person name="Kumagai A."/>
            <person name="Itakura S."/>
            <person name="Fukuzumi Y."/>
            <person name="Fujimori Y."/>
            <person name="Komiyama M."/>
            <person name="Tashiro H."/>
            <person name="Tanigami A."/>
            <person name="Fujiwara T."/>
            <person name="Ono T."/>
            <person name="Yamada K."/>
            <person name="Fujii Y."/>
            <person name="Ozaki K."/>
            <person name="Hirao M."/>
            <person name="Ohmori Y."/>
            <person name="Kawabata A."/>
            <person name="Hikiji T."/>
            <person name="Kobatake N."/>
            <person name="Inagaki H."/>
            <person name="Ikema Y."/>
            <person name="Okamoto S."/>
            <person name="Okitani R."/>
            <person name="Kawakami T."/>
            <person name="Noguchi S."/>
            <person name="Itoh T."/>
            <person name="Shigeta K."/>
            <person name="Senba T."/>
            <person name="Matsumura K."/>
            <person name="Nakajima Y."/>
            <person name="Mizuno T."/>
            <person name="Morinaga M."/>
            <person name="Sasaki M."/>
            <person name="Togashi T."/>
            <person name="Oyama M."/>
            <person name="Hata H."/>
            <person name="Watanabe M."/>
            <person name="Komatsu T."/>
            <person name="Mizushima-Sugano J."/>
            <person name="Satoh T."/>
            <person name="Shirai Y."/>
            <person name="Takahashi Y."/>
            <person name="Nakagawa K."/>
            <person name="Okumura K."/>
            <person name="Nagase T."/>
            <person name="Nomura N."/>
            <person name="Kikuchi H."/>
            <person name="Masuho Y."/>
            <person name="Yamashita R."/>
            <person name="Nakai K."/>
            <person name="Yada T."/>
            <person name="Nakamura Y."/>
            <person name="Ohara O."/>
            <person name="Isogai T."/>
            <person name="Sugano S."/>
        </authorList>
    </citation>
    <scope>NUCLEOTIDE SEQUENCE [LARGE SCALE MRNA]</scope>
</reference>
<reference key="2">
    <citation type="journal article" date="2007" name="BMC Genomics">
        <title>The full-ORF clone resource of the German cDNA consortium.</title>
        <authorList>
            <person name="Bechtel S."/>
            <person name="Rosenfelder H."/>
            <person name="Duda A."/>
            <person name="Schmidt C.P."/>
            <person name="Ernst U."/>
            <person name="Wellenreuther R."/>
            <person name="Mehrle A."/>
            <person name="Schuster C."/>
            <person name="Bahr A."/>
            <person name="Bloecker H."/>
            <person name="Heubner D."/>
            <person name="Hoerlein A."/>
            <person name="Michel G."/>
            <person name="Wedler H."/>
            <person name="Koehrer K."/>
            <person name="Ottenwaelder B."/>
            <person name="Poustka A."/>
            <person name="Wiemann S."/>
            <person name="Schupp I."/>
        </authorList>
    </citation>
    <scope>NUCLEOTIDE SEQUENCE [LARGE SCALE MRNA]</scope>
    <source>
        <tissue>Endometrium</tissue>
        <tissue>Testis</tissue>
    </source>
</reference>
<reference key="3">
    <citation type="journal article" date="2004" name="Genome Res.">
        <title>The status, quality, and expansion of the NIH full-length cDNA project: the Mammalian Gene Collection (MGC).</title>
        <authorList>
            <consortium name="The MGC Project Team"/>
        </authorList>
    </citation>
    <scope>NUCLEOTIDE SEQUENCE [LARGE SCALE MRNA]</scope>
</reference>
<reference key="4">
    <citation type="journal article" date="2013" name="J. Proteome Res.">
        <title>Toward a comprehensive characterization of a human cancer cell phosphoproteome.</title>
        <authorList>
            <person name="Zhou H."/>
            <person name="Di Palma S."/>
            <person name="Preisinger C."/>
            <person name="Peng M."/>
            <person name="Polat A.N."/>
            <person name="Heck A.J."/>
            <person name="Mohammed S."/>
        </authorList>
    </citation>
    <scope>PHOSPHORYLATION [LARGE SCALE ANALYSIS] AT SER-633</scope>
    <scope>IDENTIFICATION BY MASS SPECTROMETRY [LARGE SCALE ANALYSIS]</scope>
    <source>
        <tissue>Erythroleukemia</tissue>
    </source>
</reference>
<reference key="5">
    <citation type="journal article" date="2017" name="Cell">
        <title>Multidimensional Tracking of GPCR Signaling via Peroxidase-Catalyzed Proximity Labeling.</title>
        <authorList>
            <person name="Paek J."/>
            <person name="Kalocsay M."/>
            <person name="Staus D.P."/>
            <person name="Wingler L."/>
            <person name="Pascolutti R."/>
            <person name="Paulo J.A."/>
            <person name="Gygi S.P."/>
            <person name="Kruse A.C."/>
        </authorList>
    </citation>
    <scope>FUNCTION</scope>
    <scope>SUBCELLULAR LOCATION</scope>
</reference>
<reference key="6">
    <citation type="journal article" date="2021" name="J. Med. Genet.">
        <title>De novo missense variants in LMBRD2 are associated with developmental and motor delays, brain structure abnormalities and dysmorphic features.</title>
        <authorList>
            <person name="Malhotra A."/>
            <person name="Ziegler A."/>
            <person name="Shu L."/>
            <person name="Perrier R."/>
            <person name="Amlie-Wolf L."/>
            <person name="Wohler E."/>
            <person name="Lygia de Macena Sobreira N."/>
            <person name="Colin E."/>
            <person name="Vanderver A."/>
            <person name="Sherbini O."/>
            <person name="Stouffs K."/>
            <person name="Scalais E."/>
            <person name="Serretti A."/>
            <person name="Barth M."/>
            <person name="Navet B."/>
            <person name="Rollier P."/>
            <person name="Xi H."/>
            <person name="Wang H."/>
            <person name="Zhang H."/>
            <person name="Perry D.L."/>
            <person name="Ferrarini A."/>
            <person name="Colombo R."/>
            <person name="Pepler A."/>
            <person name="Schneider A."/>
            <person name="Tomiwa K."/>
            <person name="Okamoto N."/>
            <person name="Matsumoto N."/>
            <person name="Miyake N."/>
            <person name="Taft R."/>
            <person name="Mao X."/>
            <person name="Bonneau D."/>
        </authorList>
    </citation>
    <scope>VARIANTS DENBA ARG-123; LYS-178; ARG-193; GLU-274; GLU-326; ARG-479 AND HIS-483</scope>
    <scope>INVOLVEMENT IN DENBA</scope>
</reference>
<organism>
    <name type="scientific">Homo sapiens</name>
    <name type="common">Human</name>
    <dbReference type="NCBI Taxonomy" id="9606"/>
    <lineage>
        <taxon>Eukaryota</taxon>
        <taxon>Metazoa</taxon>
        <taxon>Chordata</taxon>
        <taxon>Craniata</taxon>
        <taxon>Vertebrata</taxon>
        <taxon>Euteleostomi</taxon>
        <taxon>Mammalia</taxon>
        <taxon>Eutheria</taxon>
        <taxon>Euarchontoglires</taxon>
        <taxon>Primates</taxon>
        <taxon>Haplorrhini</taxon>
        <taxon>Catarrhini</taxon>
        <taxon>Hominidae</taxon>
        <taxon>Homo</taxon>
    </lineage>
</organism>
<sequence>MSGAALGLEIVFVFFLALFLLHRYGDFKKQHRLVIIGTLLAWYLCFLIVFILPLDVSTTIYNRCKHAAANSSPPENSNITGLYATANPVPSQHPCFKPWSYIPDGIMPIFWRVVYWTSQFLTWILLPFMQSYARSGGFSITGKIKTALIENAIYYGTYLLIFGAFLIYVAVNPHLHLEWNQLQTIGIAAANTWGLFLLVLLLGYGLVEIPRSYWNGAKRGYLLMKTYFKAAKLMTEKADAEENLEDAMEEVRKVNESIKYNHPLRKCVDTILKKCPTEYQEKMGRNMDDYEDFDEKHSIYPSEKSLVKLHKQVIYSVQRHRRTQVQWQILLEQAFYLEDVAKNETSATHQFVHTFQSPEPENRFIQYFYNPTFEWYWECLLRPWFYKILAVVLSIFSVIVVWSECTFFSTTPVLSLFAVFIQLAEKTYNYIYIEIACFLSIFFLSICVYSTVFRIRVFNYYYLASHHQTDAYSLLFSGMLFCRLTPPLCLNFLGLTHMDSSISHKNTQPTAYTSIMGSMKVLSFIADGFYIYYPMLVVILCIATYFSLGTRCLNLLGFQQFMGDDDMTSDLVNEGKELIRKEKRKRQRQEEGENRRREWKERYGHNREDSTRNRNIHTDPKESNFSDVNTNRSAFKYTRANNRTERDRIELLQDAEPLDFNAETFTDDPLESESGRYQPGGRYLSMSRSDIFNDV</sequence>
<protein>
    <recommendedName>
        <fullName evidence="6">G-protein coupled receptor-associated protein LMBRD2</fullName>
    </recommendedName>
    <alternativeName>
        <fullName evidence="7">LMBR1 domain-containing protein 2</fullName>
    </alternativeName>
</protein>
<proteinExistence type="evidence at protein level"/>
<feature type="chain" id="PRO_0000299161" description="G-protein coupled receptor-associated protein LMBRD2">
    <location>
        <begin position="1"/>
        <end position="695"/>
    </location>
</feature>
<feature type="topological domain" description="Extracellular" evidence="1">
    <location>
        <begin position="1"/>
        <end position="5"/>
    </location>
</feature>
<feature type="transmembrane region" description="Helical" evidence="1">
    <location>
        <begin position="6"/>
        <end position="21"/>
    </location>
</feature>
<feature type="topological domain" description="Cytoplasmic" evidence="1">
    <location>
        <begin position="22"/>
        <end position="32"/>
    </location>
</feature>
<feature type="transmembrane region" description="Helical" evidence="1">
    <location>
        <begin position="33"/>
        <end position="53"/>
    </location>
</feature>
<feature type="topological domain" description="Extracellular" evidence="1">
    <location>
        <begin position="54"/>
        <end position="105"/>
    </location>
</feature>
<feature type="transmembrane region" description="Helical" evidence="1">
    <location>
        <begin position="106"/>
        <end position="126"/>
    </location>
</feature>
<feature type="topological domain" description="Cytoplasmic" evidence="1">
    <location>
        <begin position="127"/>
        <end position="150"/>
    </location>
</feature>
<feature type="transmembrane region" description="Helical" evidence="1">
    <location>
        <begin position="151"/>
        <end position="171"/>
    </location>
</feature>
<feature type="topological domain" description="Extracellular" evidence="1">
    <location>
        <begin position="172"/>
        <end position="186"/>
    </location>
</feature>
<feature type="transmembrane region" description="Helical" evidence="1">
    <location>
        <begin position="187"/>
        <end position="207"/>
    </location>
</feature>
<feature type="topological domain" description="Cytoplasmic" evidence="1">
    <location>
        <begin position="208"/>
        <end position="387"/>
    </location>
</feature>
<feature type="transmembrane region" description="Helical" evidence="1">
    <location>
        <begin position="388"/>
        <end position="408"/>
    </location>
</feature>
<feature type="topological domain" description="Extracellular" evidence="1">
    <location>
        <begin position="409"/>
        <end position="432"/>
    </location>
</feature>
<feature type="transmembrane region" description="Helical" evidence="1">
    <location>
        <begin position="433"/>
        <end position="453"/>
    </location>
</feature>
<feature type="topological domain" description="Cytoplasmic" evidence="1">
    <location>
        <begin position="454"/>
        <end position="473"/>
    </location>
</feature>
<feature type="transmembrane region" description="Helical" evidence="1">
    <location>
        <begin position="474"/>
        <end position="494"/>
    </location>
</feature>
<feature type="topological domain" description="Extracellular" evidence="1">
    <location>
        <begin position="495"/>
        <end position="521"/>
    </location>
</feature>
<feature type="transmembrane region" description="Helical" evidence="1">
    <location>
        <begin position="522"/>
        <end position="542"/>
    </location>
</feature>
<feature type="topological domain" description="Cytoplasmic" evidence="1">
    <location>
        <begin position="543"/>
        <end position="695"/>
    </location>
</feature>
<feature type="region of interest" description="Disordered" evidence="2">
    <location>
        <begin position="581"/>
        <end position="628"/>
    </location>
</feature>
<feature type="region of interest" description="Disordered" evidence="2">
    <location>
        <begin position="662"/>
        <end position="682"/>
    </location>
</feature>
<feature type="coiled-coil region" evidence="1">
    <location>
        <begin position="227"/>
        <end position="262"/>
    </location>
</feature>
<feature type="coiled-coil region" evidence="1">
    <location>
        <begin position="571"/>
        <end position="603"/>
    </location>
</feature>
<feature type="compositionally biased region" description="Basic and acidic residues" evidence="2">
    <location>
        <begin position="588"/>
        <end position="624"/>
    </location>
</feature>
<feature type="modified residue" description="Phosphoserine" evidence="8">
    <location>
        <position position="633"/>
    </location>
</feature>
<feature type="glycosylation site" description="N-linked (GlcNAc...) asparagine" evidence="1">
    <location>
        <position position="78"/>
    </location>
</feature>
<feature type="sequence variant" id="VAR_086730" description="In DENBA; dbSNP:rs2111907902." evidence="4">
    <original>W</original>
    <variation>R</variation>
    <location>
        <position position="123"/>
    </location>
</feature>
<feature type="sequence variant" id="VAR_086731" description="In DENBA; uncertain significance." evidence="4">
    <original>E</original>
    <variation>K</variation>
    <location>
        <position position="178"/>
    </location>
</feature>
<feature type="sequence variant" id="VAR_086732" description="In DENBA; uncertain significance; dbSNP:rs2111900126." evidence="4">
    <original>W</original>
    <variation>R</variation>
    <location>
        <position position="193"/>
    </location>
</feature>
<feature type="sequence variant" id="VAR_086733" description="In DENBA; uncertain significance; dbSNP:rs1581052047." evidence="4">
    <original>K</original>
    <variation>E</variation>
    <location>
        <position position="274"/>
    </location>
</feature>
<feature type="sequence variant" id="VAR_086734" description="In DENBA; uncertain significance." evidence="4">
    <original>Q</original>
    <variation>E</variation>
    <location>
        <position position="326"/>
    </location>
</feature>
<feature type="sequence variant" id="VAR_086735" description="In DENBA; uncertain significance." evidence="4">
    <original>M</original>
    <variation>R</variation>
    <location>
        <position position="479"/>
    </location>
</feature>
<feature type="sequence variant" id="VAR_086736" description="In DENBA; dbSNP:rs2111857835." evidence="4">
    <original>R</original>
    <variation>H</variation>
    <location>
        <position position="483"/>
    </location>
</feature>
<dbReference type="EMBL" id="AK091295">
    <property type="protein sequence ID" value="BAG52328.1"/>
    <property type="molecule type" value="mRNA"/>
</dbReference>
<dbReference type="EMBL" id="CR749399">
    <property type="protein sequence ID" value="CAH18245.1"/>
    <property type="molecule type" value="mRNA"/>
</dbReference>
<dbReference type="EMBL" id="AL137370">
    <property type="protein sequence ID" value="CAB70714.1"/>
    <property type="molecule type" value="mRNA"/>
</dbReference>
<dbReference type="EMBL" id="BC110506">
    <property type="protein sequence ID" value="AAI10507.1"/>
    <property type="molecule type" value="mRNA"/>
</dbReference>
<dbReference type="CCDS" id="CCDS34145.1"/>
<dbReference type="PIR" id="T46434">
    <property type="entry name" value="T46434"/>
</dbReference>
<dbReference type="RefSeq" id="NP_001007528.1">
    <property type="nucleotide sequence ID" value="NM_001007527.2"/>
</dbReference>
<dbReference type="RefSeq" id="XP_011512464.1">
    <property type="nucleotide sequence ID" value="XM_011514162.3"/>
</dbReference>
<dbReference type="RefSeq" id="XP_054209771.1">
    <property type="nucleotide sequence ID" value="XM_054353796.1"/>
</dbReference>
<dbReference type="SMR" id="Q68DH5"/>
<dbReference type="BioGRID" id="124923">
    <property type="interactions" value="67"/>
</dbReference>
<dbReference type="FunCoup" id="Q68DH5">
    <property type="interactions" value="1429"/>
</dbReference>
<dbReference type="IntAct" id="Q68DH5">
    <property type="interactions" value="60"/>
</dbReference>
<dbReference type="MINT" id="Q68DH5"/>
<dbReference type="STRING" id="9606.ENSP00000296603"/>
<dbReference type="TCDB" id="9.A.54.3.5">
    <property type="family name" value="the lysosomal cobalamin (b12) transporter (l-b12t) family"/>
</dbReference>
<dbReference type="GlyCosmos" id="Q68DH5">
    <property type="glycosylation" value="1 site, No reported glycans"/>
</dbReference>
<dbReference type="GlyGen" id="Q68DH5">
    <property type="glycosylation" value="3 sites, 1 O-linked glycan (2 sites)"/>
</dbReference>
<dbReference type="iPTMnet" id="Q68DH5"/>
<dbReference type="PhosphoSitePlus" id="Q68DH5"/>
<dbReference type="SwissPalm" id="Q68DH5"/>
<dbReference type="BioMuta" id="LMBRD2"/>
<dbReference type="DMDM" id="74708880"/>
<dbReference type="jPOST" id="Q68DH5"/>
<dbReference type="MassIVE" id="Q68DH5"/>
<dbReference type="PaxDb" id="9606-ENSP00000296603"/>
<dbReference type="PeptideAtlas" id="Q68DH5"/>
<dbReference type="ProteomicsDB" id="66080"/>
<dbReference type="Pumba" id="Q68DH5"/>
<dbReference type="Antibodypedia" id="2569">
    <property type="antibodies" value="14 antibodies from 12 providers"/>
</dbReference>
<dbReference type="DNASU" id="92255"/>
<dbReference type="Ensembl" id="ENST00000296603.5">
    <property type="protein sequence ID" value="ENSP00000296603.4"/>
    <property type="gene ID" value="ENSG00000164187.7"/>
</dbReference>
<dbReference type="GeneID" id="92255"/>
<dbReference type="KEGG" id="hsa:92255"/>
<dbReference type="MANE-Select" id="ENST00000296603.5">
    <property type="protein sequence ID" value="ENSP00000296603.4"/>
    <property type="RefSeq nucleotide sequence ID" value="NM_001007527.2"/>
    <property type="RefSeq protein sequence ID" value="NP_001007528.1"/>
</dbReference>
<dbReference type="UCSC" id="uc003jka.2">
    <property type="organism name" value="human"/>
</dbReference>
<dbReference type="AGR" id="HGNC:25287"/>
<dbReference type="CTD" id="92255"/>
<dbReference type="DisGeNET" id="92255"/>
<dbReference type="GeneCards" id="LMBRD2"/>
<dbReference type="HGNC" id="HGNC:25287">
    <property type="gene designation" value="LMBRD2"/>
</dbReference>
<dbReference type="HPA" id="ENSG00000164187">
    <property type="expression patterns" value="Low tissue specificity"/>
</dbReference>
<dbReference type="MalaCards" id="LMBRD2"/>
<dbReference type="MIM" id="619490">
    <property type="type" value="gene"/>
</dbReference>
<dbReference type="MIM" id="619694">
    <property type="type" value="phenotype"/>
</dbReference>
<dbReference type="neXtProt" id="NX_Q68DH5"/>
<dbReference type="OpenTargets" id="ENSG00000164187"/>
<dbReference type="Orphanet" id="528084">
    <property type="disease" value="Non-specific syndromic intellectual disability"/>
</dbReference>
<dbReference type="PharmGKB" id="PA142671541"/>
<dbReference type="VEuPathDB" id="HostDB:ENSG00000164187"/>
<dbReference type="eggNOG" id="KOG2296">
    <property type="taxonomic scope" value="Eukaryota"/>
</dbReference>
<dbReference type="GeneTree" id="ENSGT00390000018651"/>
<dbReference type="HOGENOM" id="CLU_018886_0_0_1"/>
<dbReference type="InParanoid" id="Q68DH5"/>
<dbReference type="OMA" id="QLERICY"/>
<dbReference type="OrthoDB" id="203099at2759"/>
<dbReference type="PAN-GO" id="Q68DH5">
    <property type="GO annotations" value="2 GO annotations based on evolutionary models"/>
</dbReference>
<dbReference type="PhylomeDB" id="Q68DH5"/>
<dbReference type="TreeFam" id="TF314938"/>
<dbReference type="PathwayCommons" id="Q68DH5"/>
<dbReference type="SignaLink" id="Q68DH5"/>
<dbReference type="BioGRID-ORCS" id="92255">
    <property type="hits" value="15 hits in 1161 CRISPR screens"/>
</dbReference>
<dbReference type="GenomeRNAi" id="92255"/>
<dbReference type="Pharos" id="Q68DH5">
    <property type="development level" value="Tdark"/>
</dbReference>
<dbReference type="PRO" id="PR:Q68DH5"/>
<dbReference type="Proteomes" id="UP000005640">
    <property type="component" value="Chromosome 5"/>
</dbReference>
<dbReference type="RNAct" id="Q68DH5">
    <property type="molecule type" value="protein"/>
</dbReference>
<dbReference type="Bgee" id="ENSG00000164187">
    <property type="expression patterns" value="Expressed in Brodmann (1909) area 23 and 189 other cell types or tissues"/>
</dbReference>
<dbReference type="GO" id="GO:0016020">
    <property type="term" value="C:membrane"/>
    <property type="evidence" value="ECO:0007005"/>
    <property type="project" value="UniProtKB"/>
</dbReference>
<dbReference type="GO" id="GO:0005886">
    <property type="term" value="C:plasma membrane"/>
    <property type="evidence" value="ECO:0007669"/>
    <property type="project" value="UniProtKB-SubCell"/>
</dbReference>
<dbReference type="GO" id="GO:0071875">
    <property type="term" value="P:adrenergic receptor signaling pathway"/>
    <property type="evidence" value="ECO:0000315"/>
    <property type="project" value="UniProtKB"/>
</dbReference>
<dbReference type="InterPro" id="IPR051584">
    <property type="entry name" value="GPCR-associated_LMBR1"/>
</dbReference>
<dbReference type="InterPro" id="IPR006876">
    <property type="entry name" value="LMBR1-like_membr_prot"/>
</dbReference>
<dbReference type="PANTHER" id="PTHR21355">
    <property type="entry name" value="G-PROTEIN COUPLED RECEPTOR-ASSOCIATED PROTEIN LMBRD2"/>
    <property type="match status" value="1"/>
</dbReference>
<dbReference type="PANTHER" id="PTHR21355:SF0">
    <property type="entry name" value="G-PROTEIN COUPLED RECEPTOR-ASSOCIATED PROTEIN LMBRD2"/>
    <property type="match status" value="1"/>
</dbReference>
<dbReference type="Pfam" id="PF04791">
    <property type="entry name" value="LMBR1"/>
    <property type="match status" value="1"/>
</dbReference>
<comment type="function">
    <text evidence="3 6">Recruited to ligand-activated beta-2 adrenergic receptor/ADRB2, it negatively regulates the adrenergic receptor signaling pathway (PubMed:28388415). May also regulate other G-protein coupled receptors including type-1 angiotensin II receptor/AGTR1 (Probable).</text>
</comment>
<comment type="subcellular location">
    <subcellularLocation>
        <location evidence="6">Cell membrane</location>
        <topology evidence="1">Multi-pass membrane protein</topology>
    </subcellularLocation>
</comment>
<comment type="disease" evidence="4">
    <disease id="DI-06311">
        <name>Developmental delay with variable neurologic and brain abnormalities</name>
        <acronym>DENBA</acronym>
        <description>An autosomal dominant disorder characterized by onset of motor and speech delay in early childhood. Disease severity and clinical manifestations are highly variable. Most patients have delayed walking and variably impaired intellectual development. Additional features may include seizures, spasticity, and ocular abnormalities. Brain imaging often shows thin corpus callosum and may show white matter atrophy, myelination abnormalities, or enlarged ventricles.</description>
        <dbReference type="MIM" id="619694"/>
    </disease>
    <text>The disease is caused by variants affecting the gene represented in this entry.</text>
</comment>
<comment type="similarity">
    <text evidence="5">Belongs to the LIMR family.</text>
</comment>
<keyword id="KW-1003">Cell membrane</keyword>
<keyword id="KW-0175">Coiled coil</keyword>
<keyword id="KW-0225">Disease variant</keyword>
<keyword id="KW-0325">Glycoprotein</keyword>
<keyword id="KW-0991">Intellectual disability</keyword>
<keyword id="KW-0472">Membrane</keyword>
<keyword id="KW-0597">Phosphoprotein</keyword>
<keyword id="KW-1267">Proteomics identification</keyword>
<keyword id="KW-1185">Reference proteome</keyword>
<keyword id="KW-0812">Transmembrane</keyword>
<keyword id="KW-1133">Transmembrane helix</keyword>